<reference key="1">
    <citation type="journal article" date="2007" name="J. Bacteriol.">
        <title>Genome sequence and analysis of the soil cellulolytic actinomycete Thermobifida fusca YX.</title>
        <authorList>
            <person name="Lykidis A."/>
            <person name="Mavromatis K."/>
            <person name="Ivanova N."/>
            <person name="Anderson I."/>
            <person name="Land M."/>
            <person name="DiBartolo G."/>
            <person name="Martinez M."/>
            <person name="Lapidus A."/>
            <person name="Lucas S."/>
            <person name="Copeland A."/>
            <person name="Richardson P."/>
            <person name="Wilson D.B."/>
            <person name="Kyrpides N."/>
        </authorList>
    </citation>
    <scope>NUCLEOTIDE SEQUENCE [LARGE SCALE GENOMIC DNA]</scope>
    <source>
        <strain>YX</strain>
    </source>
</reference>
<gene>
    <name evidence="1" type="primary">rpoZ</name>
    <name type="ordered locus">Tfu_1063</name>
</gene>
<sequence>MAGTPPVAEGITNPPIDELLEVVDSKYSLVTMAAKRARQINAYYAQLGEGLLEYVGPLVETQPQEKPLSIALREIREGLLTAETQEEA</sequence>
<evidence type="ECO:0000255" key="1">
    <source>
        <dbReference type="HAMAP-Rule" id="MF_00366"/>
    </source>
</evidence>
<comment type="function">
    <text evidence="1">Promotes RNA polymerase assembly. Latches the N- and C-terminal regions of the beta' subunit thereby facilitating its interaction with the beta and alpha subunits.</text>
</comment>
<comment type="catalytic activity">
    <reaction evidence="1">
        <text>RNA(n) + a ribonucleoside 5'-triphosphate = RNA(n+1) + diphosphate</text>
        <dbReference type="Rhea" id="RHEA:21248"/>
        <dbReference type="Rhea" id="RHEA-COMP:14527"/>
        <dbReference type="Rhea" id="RHEA-COMP:17342"/>
        <dbReference type="ChEBI" id="CHEBI:33019"/>
        <dbReference type="ChEBI" id="CHEBI:61557"/>
        <dbReference type="ChEBI" id="CHEBI:140395"/>
        <dbReference type="EC" id="2.7.7.6"/>
    </reaction>
</comment>
<comment type="subunit">
    <text evidence="1">The RNAP catalytic core consists of 2 alpha, 1 beta, 1 beta' and 1 omega subunit. When a sigma factor is associated with the core the holoenzyme is formed, which can initiate transcription.</text>
</comment>
<comment type="similarity">
    <text evidence="1">Belongs to the RNA polymerase subunit omega family.</text>
</comment>
<feature type="chain" id="PRO_0000237523" description="DNA-directed RNA polymerase subunit omega">
    <location>
        <begin position="1"/>
        <end position="88"/>
    </location>
</feature>
<protein>
    <recommendedName>
        <fullName evidence="1">DNA-directed RNA polymerase subunit omega</fullName>
        <shortName evidence="1">RNAP omega subunit</shortName>
        <ecNumber evidence="1">2.7.7.6</ecNumber>
    </recommendedName>
    <alternativeName>
        <fullName evidence="1">RNA polymerase omega subunit</fullName>
    </alternativeName>
    <alternativeName>
        <fullName evidence="1">Transcriptase subunit omega</fullName>
    </alternativeName>
</protein>
<dbReference type="EC" id="2.7.7.6" evidence="1"/>
<dbReference type="EMBL" id="CP000088">
    <property type="protein sequence ID" value="AAZ55101.1"/>
    <property type="molecule type" value="Genomic_DNA"/>
</dbReference>
<dbReference type="RefSeq" id="WP_011291510.1">
    <property type="nucleotide sequence ID" value="NC_007333.1"/>
</dbReference>
<dbReference type="SMR" id="Q47R16"/>
<dbReference type="STRING" id="269800.Tfu_1063"/>
<dbReference type="KEGG" id="tfu:Tfu_1063"/>
<dbReference type="eggNOG" id="COG1758">
    <property type="taxonomic scope" value="Bacteria"/>
</dbReference>
<dbReference type="HOGENOM" id="CLU_125406_1_1_11"/>
<dbReference type="OrthoDB" id="8481372at2"/>
<dbReference type="GO" id="GO:0000428">
    <property type="term" value="C:DNA-directed RNA polymerase complex"/>
    <property type="evidence" value="ECO:0007669"/>
    <property type="project" value="UniProtKB-KW"/>
</dbReference>
<dbReference type="GO" id="GO:0003677">
    <property type="term" value="F:DNA binding"/>
    <property type="evidence" value="ECO:0007669"/>
    <property type="project" value="UniProtKB-UniRule"/>
</dbReference>
<dbReference type="GO" id="GO:0003899">
    <property type="term" value="F:DNA-directed RNA polymerase activity"/>
    <property type="evidence" value="ECO:0007669"/>
    <property type="project" value="UniProtKB-UniRule"/>
</dbReference>
<dbReference type="GO" id="GO:0006351">
    <property type="term" value="P:DNA-templated transcription"/>
    <property type="evidence" value="ECO:0007669"/>
    <property type="project" value="UniProtKB-UniRule"/>
</dbReference>
<dbReference type="Gene3D" id="3.90.940.10">
    <property type="match status" value="1"/>
</dbReference>
<dbReference type="HAMAP" id="MF_00366">
    <property type="entry name" value="RNApol_bact_RpoZ"/>
    <property type="match status" value="1"/>
</dbReference>
<dbReference type="InterPro" id="IPR003716">
    <property type="entry name" value="DNA-dir_RNA_pol_omega"/>
</dbReference>
<dbReference type="InterPro" id="IPR006110">
    <property type="entry name" value="Pol_omega/Rpo6/RPB6"/>
</dbReference>
<dbReference type="InterPro" id="IPR036161">
    <property type="entry name" value="RPB6/omega-like_sf"/>
</dbReference>
<dbReference type="NCBIfam" id="TIGR00690">
    <property type="entry name" value="rpoZ"/>
    <property type="match status" value="1"/>
</dbReference>
<dbReference type="PANTHER" id="PTHR34476">
    <property type="entry name" value="DNA-DIRECTED RNA POLYMERASE SUBUNIT OMEGA"/>
    <property type="match status" value="1"/>
</dbReference>
<dbReference type="PANTHER" id="PTHR34476:SF1">
    <property type="entry name" value="DNA-DIRECTED RNA POLYMERASE SUBUNIT OMEGA"/>
    <property type="match status" value="1"/>
</dbReference>
<dbReference type="Pfam" id="PF01192">
    <property type="entry name" value="RNA_pol_Rpb6"/>
    <property type="match status" value="1"/>
</dbReference>
<dbReference type="SMART" id="SM01409">
    <property type="entry name" value="RNA_pol_Rpb6"/>
    <property type="match status" value="1"/>
</dbReference>
<dbReference type="SUPFAM" id="SSF63562">
    <property type="entry name" value="RPB6/omega subunit-like"/>
    <property type="match status" value="1"/>
</dbReference>
<proteinExistence type="inferred from homology"/>
<accession>Q47R16</accession>
<organism>
    <name type="scientific">Thermobifida fusca (strain YX)</name>
    <dbReference type="NCBI Taxonomy" id="269800"/>
    <lineage>
        <taxon>Bacteria</taxon>
        <taxon>Bacillati</taxon>
        <taxon>Actinomycetota</taxon>
        <taxon>Actinomycetes</taxon>
        <taxon>Streptosporangiales</taxon>
        <taxon>Nocardiopsidaceae</taxon>
        <taxon>Thermobifida</taxon>
    </lineage>
</organism>
<keyword id="KW-0240">DNA-directed RNA polymerase</keyword>
<keyword id="KW-0548">Nucleotidyltransferase</keyword>
<keyword id="KW-0804">Transcription</keyword>
<keyword id="KW-0808">Transferase</keyword>
<name>RPOZ_THEFY</name>